<gene>
    <name type="primary">cinD-1</name>
    <name type="synonym">H7</name>
    <name type="ORF">DDB_G0273061</name>
</gene>
<gene>
    <name type="primary">cinD-2</name>
    <name type="synonym">H7</name>
    <name type="ORF">DDB_G0273775</name>
</gene>
<comment type="developmental stage">
    <text>This protein is expressed in growing cells and deactivated upon the initiation of development.</text>
</comment>
<comment type="caution">
    <text evidence="2">The gene for this protein is duplicated in strains AX3 and AX4. These strains contain a duplication of a segment of 750 kb of chromosome 2 compared to the corresponding sequence in strain AX2.</text>
</comment>
<dbReference type="EMBL" id="X15385">
    <property type="protein sequence ID" value="CAA33444.1"/>
    <property type="molecule type" value="mRNA"/>
</dbReference>
<dbReference type="EMBL" id="AAFI02000011">
    <property type="protein sequence ID" value="EAL70578.2"/>
    <property type="molecule type" value="Genomic_DNA"/>
</dbReference>
<dbReference type="EMBL" id="AAFI02000009">
    <property type="protein sequence ID" value="EAL70748.1"/>
    <property type="molecule type" value="Genomic_DNA"/>
</dbReference>
<dbReference type="PIR" id="S07568">
    <property type="entry name" value="S07568"/>
</dbReference>
<dbReference type="RefSeq" id="XP_644504.2">
    <property type="nucleotide sequence ID" value="XM_639412.2"/>
</dbReference>
<dbReference type="RefSeq" id="XP_644746.1">
    <property type="nucleotide sequence ID" value="XM_639654.1"/>
</dbReference>
<dbReference type="SMR" id="P14327"/>
<dbReference type="FunCoup" id="P14327">
    <property type="interactions" value="841"/>
</dbReference>
<dbReference type="STRING" id="44689.P14327"/>
<dbReference type="PaxDb" id="44689-DDB0191304"/>
<dbReference type="EnsemblProtists" id="EAL70578">
    <property type="protein sequence ID" value="EAL70578"/>
    <property type="gene ID" value="DDB_G0273775"/>
</dbReference>
<dbReference type="EnsemblProtists" id="EAL70748">
    <property type="protein sequence ID" value="EAL70748"/>
    <property type="gene ID" value="DDB_G0273061"/>
</dbReference>
<dbReference type="GeneID" id="8618846"/>
<dbReference type="GeneID" id="8619130"/>
<dbReference type="KEGG" id="ddi:DDB_G0273061"/>
<dbReference type="KEGG" id="ddi:DDB_G0273775"/>
<dbReference type="dictyBase" id="DDB_G0273061">
    <property type="gene designation" value="cinD-1"/>
</dbReference>
<dbReference type="dictyBase" id="DDB_G0273775">
    <property type="gene designation" value="cinD-2"/>
</dbReference>
<dbReference type="VEuPathDB" id="AmoebaDB:DDB_G0273775"/>
<dbReference type="eggNOG" id="KOG3398">
    <property type="taxonomic scope" value="Eukaryota"/>
</dbReference>
<dbReference type="HOGENOM" id="CLU_112609_0_2_1"/>
<dbReference type="InParanoid" id="P14327"/>
<dbReference type="OMA" id="KANQQRS"/>
<dbReference type="PhylomeDB" id="P14327"/>
<dbReference type="PRO" id="PR:P14327"/>
<dbReference type="Proteomes" id="UP000002195">
    <property type="component" value="Chromosome 2"/>
</dbReference>
<dbReference type="GO" id="GO:0005634">
    <property type="term" value="C:nucleus"/>
    <property type="evidence" value="ECO:0000318"/>
    <property type="project" value="GO_Central"/>
</dbReference>
<dbReference type="GO" id="GO:0003677">
    <property type="term" value="F:DNA binding"/>
    <property type="evidence" value="ECO:0007669"/>
    <property type="project" value="UniProtKB-KW"/>
</dbReference>
<dbReference type="GO" id="GO:0003713">
    <property type="term" value="F:transcription coactivator activity"/>
    <property type="evidence" value="ECO:0000250"/>
    <property type="project" value="dictyBase"/>
</dbReference>
<dbReference type="GO" id="GO:0045944">
    <property type="term" value="P:positive regulation of transcription by RNA polymerase II"/>
    <property type="evidence" value="ECO:0000250"/>
    <property type="project" value="dictyBase"/>
</dbReference>
<dbReference type="CDD" id="cd00093">
    <property type="entry name" value="HTH_XRE"/>
    <property type="match status" value="1"/>
</dbReference>
<dbReference type="FunFam" id="1.10.260.40:FF:000018">
    <property type="entry name" value="Multiprotein bridging factor 1"/>
    <property type="match status" value="1"/>
</dbReference>
<dbReference type="Gene3D" id="1.10.260.40">
    <property type="entry name" value="lambda repressor-like DNA-binding domains"/>
    <property type="match status" value="1"/>
</dbReference>
<dbReference type="InterPro" id="IPR001387">
    <property type="entry name" value="Cro/C1-type_HTH"/>
</dbReference>
<dbReference type="InterPro" id="IPR010982">
    <property type="entry name" value="Lambda_DNA-bd_dom_sf"/>
</dbReference>
<dbReference type="PANTHER" id="PTHR10245:SF15">
    <property type="entry name" value="ENDOTHELIAL DIFFERENTIATION-RELATED FACTOR 1"/>
    <property type="match status" value="1"/>
</dbReference>
<dbReference type="PANTHER" id="PTHR10245">
    <property type="entry name" value="ENDOTHELIAL DIFFERENTIATION-RELATED FACTOR 1 MULTIPROTEIN BRIDGING FACTOR 1"/>
    <property type="match status" value="1"/>
</dbReference>
<dbReference type="Pfam" id="PF01381">
    <property type="entry name" value="HTH_3"/>
    <property type="match status" value="1"/>
</dbReference>
<dbReference type="SMART" id="SM00530">
    <property type="entry name" value="HTH_XRE"/>
    <property type="match status" value="1"/>
</dbReference>
<dbReference type="SUPFAM" id="SSF47413">
    <property type="entry name" value="lambda repressor-like DNA-binding domains"/>
    <property type="match status" value="1"/>
</dbReference>
<dbReference type="PROSITE" id="PS50943">
    <property type="entry name" value="HTH_CROC1"/>
    <property type="match status" value="1"/>
</dbReference>
<organism>
    <name type="scientific">Dictyostelium discoideum</name>
    <name type="common">Social amoeba</name>
    <dbReference type="NCBI Taxonomy" id="44689"/>
    <lineage>
        <taxon>Eukaryota</taxon>
        <taxon>Amoebozoa</taxon>
        <taxon>Evosea</taxon>
        <taxon>Eumycetozoa</taxon>
        <taxon>Dictyostelia</taxon>
        <taxon>Dictyosteliales</taxon>
        <taxon>Dictyosteliaceae</taxon>
        <taxon>Dictyostelium</taxon>
    </lineage>
</organism>
<keyword id="KW-0238">DNA-binding</keyword>
<keyword id="KW-1185">Reference proteome</keyword>
<feature type="chain" id="PRO_0000149745" description="Vegetative-specific protein H7">
    <location>
        <begin position="1"/>
        <end position="104"/>
    </location>
</feature>
<feature type="domain" description="HTH cro/C1-type" evidence="1">
    <location>
        <begin position="43"/>
        <end position="97"/>
    </location>
</feature>
<feature type="DNA-binding region" description="H-T-H motif" evidence="1">
    <location>
        <begin position="54"/>
        <end position="73"/>
    </location>
</feature>
<feature type="sequence conflict" description="In Ref. 1; CAA33444." evidence="2" ref="1">
    <original>V</original>
    <variation>A</variation>
    <location>
        <position position="24"/>
    </location>
</feature>
<protein>
    <recommendedName>
        <fullName>Vegetative-specific protein H7</fullName>
    </recommendedName>
</protein>
<name>VSH7_DICDI</name>
<evidence type="ECO:0000255" key="1">
    <source>
        <dbReference type="PROSITE-ProRule" id="PRU00257"/>
    </source>
</evidence>
<evidence type="ECO:0000305" key="2"/>
<reference key="1">
    <citation type="submission" date="1989-05" db="EMBL/GenBank/DDBJ databases">
        <authorList>
            <person name="Singleton C.K."/>
            <person name="Manning S.S."/>
            <person name="Ken R."/>
        </authorList>
    </citation>
    <scope>NUCLEOTIDE SEQUENCE [MRNA]</scope>
    <source>
        <strain>AX3</strain>
    </source>
</reference>
<reference key="2">
    <citation type="journal article" date="2002" name="Nature">
        <title>Sequence and analysis of chromosome 2 of Dictyostelium discoideum.</title>
        <authorList>
            <person name="Gloeckner G."/>
            <person name="Eichinger L."/>
            <person name="Szafranski K."/>
            <person name="Pachebat J.A."/>
            <person name="Bankier A.T."/>
            <person name="Dear P.H."/>
            <person name="Lehmann R."/>
            <person name="Baumgart C."/>
            <person name="Parra G."/>
            <person name="Abril J.F."/>
            <person name="Guigo R."/>
            <person name="Kumpf K."/>
            <person name="Tunggal B."/>
            <person name="Cox E.C."/>
            <person name="Quail M.A."/>
            <person name="Platzer M."/>
            <person name="Rosenthal A."/>
            <person name="Noegel A.A."/>
        </authorList>
    </citation>
    <scope>NUCLEOTIDE SEQUENCE [LARGE SCALE GENOMIC DNA]</scope>
    <source>
        <strain>AX4</strain>
    </source>
</reference>
<reference key="3">
    <citation type="journal article" date="2005" name="Nature">
        <title>The genome of the social amoeba Dictyostelium discoideum.</title>
        <authorList>
            <person name="Eichinger L."/>
            <person name="Pachebat J.A."/>
            <person name="Gloeckner G."/>
            <person name="Rajandream M.A."/>
            <person name="Sucgang R."/>
            <person name="Berriman M."/>
            <person name="Song J."/>
            <person name="Olsen R."/>
            <person name="Szafranski K."/>
            <person name="Xu Q."/>
            <person name="Tunggal B."/>
            <person name="Kummerfeld S."/>
            <person name="Madera M."/>
            <person name="Konfortov B.A."/>
            <person name="Rivero F."/>
            <person name="Bankier A.T."/>
            <person name="Lehmann R."/>
            <person name="Hamlin N."/>
            <person name="Davies R."/>
            <person name="Gaudet P."/>
            <person name="Fey P."/>
            <person name="Pilcher K."/>
            <person name="Chen G."/>
            <person name="Saunders D."/>
            <person name="Sodergren E.J."/>
            <person name="Davis P."/>
            <person name="Kerhornou A."/>
            <person name="Nie X."/>
            <person name="Hall N."/>
            <person name="Anjard C."/>
            <person name="Hemphill L."/>
            <person name="Bason N."/>
            <person name="Farbrother P."/>
            <person name="Desany B."/>
            <person name="Just E."/>
            <person name="Morio T."/>
            <person name="Rost R."/>
            <person name="Churcher C.M."/>
            <person name="Cooper J."/>
            <person name="Haydock S."/>
            <person name="van Driessche N."/>
            <person name="Cronin A."/>
            <person name="Goodhead I."/>
            <person name="Muzny D.M."/>
            <person name="Mourier T."/>
            <person name="Pain A."/>
            <person name="Lu M."/>
            <person name="Harper D."/>
            <person name="Lindsay R."/>
            <person name="Hauser H."/>
            <person name="James K.D."/>
            <person name="Quiles M."/>
            <person name="Madan Babu M."/>
            <person name="Saito T."/>
            <person name="Buchrieser C."/>
            <person name="Wardroper A."/>
            <person name="Felder M."/>
            <person name="Thangavelu M."/>
            <person name="Johnson D."/>
            <person name="Knights A."/>
            <person name="Loulseged H."/>
            <person name="Mungall K.L."/>
            <person name="Oliver K."/>
            <person name="Price C."/>
            <person name="Quail M.A."/>
            <person name="Urushihara H."/>
            <person name="Hernandez J."/>
            <person name="Rabbinowitsch E."/>
            <person name="Steffen D."/>
            <person name="Sanders M."/>
            <person name="Ma J."/>
            <person name="Kohara Y."/>
            <person name="Sharp S."/>
            <person name="Simmonds M.N."/>
            <person name="Spiegler S."/>
            <person name="Tivey A."/>
            <person name="Sugano S."/>
            <person name="White B."/>
            <person name="Walker D."/>
            <person name="Woodward J.R."/>
            <person name="Winckler T."/>
            <person name="Tanaka Y."/>
            <person name="Shaulsky G."/>
            <person name="Schleicher M."/>
            <person name="Weinstock G.M."/>
            <person name="Rosenthal A."/>
            <person name="Cox E.C."/>
            <person name="Chisholm R.L."/>
            <person name="Gibbs R.A."/>
            <person name="Loomis W.F."/>
            <person name="Platzer M."/>
            <person name="Kay R.R."/>
            <person name="Williams J.G."/>
            <person name="Dear P.H."/>
            <person name="Noegel A.A."/>
            <person name="Barrell B.G."/>
            <person name="Kuspa A."/>
        </authorList>
    </citation>
    <scope>NUCLEOTIDE SEQUENCE [LARGE SCALE GENOMIC DNA]</scope>
    <source>
        <strain>AX4</strain>
    </source>
</reference>
<accession>P14327</accession>
<accession>Q556W5</accession>
<accession>Q558A1</accession>
<accession>Q86AJ3</accession>
<sequence length="104" mass="11354">MDVQTKYGAGQNKVLGGANQKKIVESEEDIALPELNPSVPQAIQRARNALKMTQKELAFKINERPGVINEYESGSAIPSQAVLSKLEKALNVKLRGKEIGKPLK</sequence>
<proteinExistence type="evidence at transcript level"/>